<keyword id="KW-0749">Sporulation</keyword>
<keyword id="KW-0800">Toxin</keyword>
<keyword id="KW-0843">Virulence</keyword>
<proteinExistence type="evidence at transcript level"/>
<dbReference type="EMBL" id="L07025">
    <property type="protein sequence ID" value="AAA67694.1"/>
    <property type="molecule type" value="Genomic_DNA"/>
</dbReference>
<dbReference type="PIR" id="T18213">
    <property type="entry name" value="T18213"/>
</dbReference>
<dbReference type="SMR" id="Q45760"/>
<dbReference type="GO" id="GO:0090729">
    <property type="term" value="F:toxin activity"/>
    <property type="evidence" value="ECO:0007669"/>
    <property type="project" value="UniProtKB-KW"/>
</dbReference>
<dbReference type="GO" id="GO:0030435">
    <property type="term" value="P:sporulation resulting in formation of a cellular spore"/>
    <property type="evidence" value="ECO:0007669"/>
    <property type="project" value="UniProtKB-KW"/>
</dbReference>
<dbReference type="GO" id="GO:0001907">
    <property type="term" value="P:symbiont-mediated killing of host cell"/>
    <property type="evidence" value="ECO:0007669"/>
    <property type="project" value="InterPro"/>
</dbReference>
<dbReference type="CDD" id="cd04085">
    <property type="entry name" value="delta_endotoxin_C"/>
    <property type="match status" value="1"/>
</dbReference>
<dbReference type="Gene3D" id="2.60.120.260">
    <property type="entry name" value="Galactose-binding domain-like"/>
    <property type="match status" value="1"/>
</dbReference>
<dbReference type="Gene3D" id="1.20.190.10">
    <property type="entry name" value="Pesticidal crystal protein, N-terminal domain"/>
    <property type="match status" value="1"/>
</dbReference>
<dbReference type="InterPro" id="IPR041587">
    <property type="entry name" value="Cry_V"/>
</dbReference>
<dbReference type="InterPro" id="IPR008979">
    <property type="entry name" value="Galactose-bd-like_sf"/>
</dbReference>
<dbReference type="InterPro" id="IPR005638">
    <property type="entry name" value="Pest_crys_dom-III"/>
</dbReference>
<dbReference type="InterPro" id="IPR005639">
    <property type="entry name" value="Pest_crys_dom_I"/>
</dbReference>
<dbReference type="InterPro" id="IPR036716">
    <property type="entry name" value="Pest_crys_N_sf"/>
</dbReference>
<dbReference type="Pfam" id="PF17997">
    <property type="entry name" value="Cry1Ac_D5"/>
    <property type="match status" value="1"/>
</dbReference>
<dbReference type="Pfam" id="PF03944">
    <property type="entry name" value="Endotoxin_C"/>
    <property type="match status" value="1"/>
</dbReference>
<dbReference type="Pfam" id="PF03945">
    <property type="entry name" value="Endotoxin_N"/>
    <property type="match status" value="1"/>
</dbReference>
<dbReference type="SUPFAM" id="SSF56849">
    <property type="entry name" value="delta-Endotoxin (insectocide), N-terminal domain"/>
    <property type="match status" value="1"/>
</dbReference>
<dbReference type="SUPFAM" id="SSF49785">
    <property type="entry name" value="Galactose-binding domain-like"/>
    <property type="match status" value="1"/>
</dbReference>
<protein>
    <recommendedName>
        <fullName>Pesticidal crystal protein Cry5Aa</fullName>
    </recommendedName>
    <alternativeName>
        <fullName>152 kDa crystal protein</fullName>
    </alternativeName>
    <alternativeName>
        <fullName>Crystaline entomocidal protoxin</fullName>
    </alternativeName>
    <alternativeName>
        <fullName>Insecticidal delta-endotoxin CryVA(a)</fullName>
    </alternativeName>
</protein>
<gene>
    <name type="primary">cry5Aa</name>
    <name type="synonym">cryVA</name>
    <name type="synonym">cryVA(a)</name>
</gene>
<reference key="1">
    <citation type="patent" date="1994-01-25" number="US5281530">
        <title>Genes encoding nematode-active toxins cloned from Bacillus thuringiensis isolate PS17.</title>
        <authorList>
            <person name="Sick A.J."/>
            <person name="Schwab G.E."/>
            <person name="Payne J.M."/>
        </authorList>
    </citation>
    <scope>NUCLEOTIDE SEQUENCE [GENOMIC DNA]</scope>
    <source>
        <strain>NRRL B-18243 / PS17</strain>
    </source>
</reference>
<name>CR5AA_BACUD</name>
<accession>Q45760</accession>
<comment type="function">
    <text>Endotoxin with nematicidal activity.</text>
</comment>
<comment type="developmental stage">
    <text>The crystal protein is produced during sporulation and is accumulated both as an inclusion and as part of the spore coat.</text>
</comment>
<comment type="miscellaneous">
    <text>Toxic segment of the protein is located in the N-terminus.</text>
</comment>
<comment type="similarity">
    <text evidence="2">Belongs to the delta endotoxin family.</text>
</comment>
<feature type="chain" id="PRO_0000174066" description="Pesticidal crystal protein Cry5Aa">
    <location>
        <begin position="1"/>
        <end position="1385"/>
    </location>
</feature>
<feature type="region of interest" description="Disordered" evidence="1">
    <location>
        <begin position="768"/>
        <end position="799"/>
    </location>
</feature>
<feature type="region of interest" description="Disordered" evidence="1">
    <location>
        <begin position="1359"/>
        <end position="1385"/>
    </location>
</feature>
<feature type="compositionally biased region" description="Gly residues" evidence="1">
    <location>
        <begin position="782"/>
        <end position="796"/>
    </location>
</feature>
<feature type="compositionally biased region" description="Low complexity" evidence="1">
    <location>
        <begin position="1370"/>
        <end position="1385"/>
    </location>
</feature>
<sequence length="1385" mass="152440">MAILNELYPSVPYNVLAYTPPSFLPDAGTQATPADLTAYEQLLKNLEKGINAGTYSKAIADVLKGIFIDDTINYQTYVNIGLSLITLAVPEIGIFTPFIGLFFAALNKHDAPPPPNAKDIFEAMKPAIQEMIDRTLTADEQTFLNGEISGLQNLAARYQSTMDDIQSHGGFNKVDSGLIKKFTDEVLSLNSFYTDRLPVFITDNTADRTLLGLPYYAILASMHLMLLRDIITKGPTWDSKINFTPDAIDSFKTDIKNNIKLYSKTIYDVFQKGLASYGTPSDLESFAKKQKYIEIMTTHCLDFARLFPTFDPDLYPTGSGDISLQKTRRILSPFIPIRTADGLTLNNTSIDTSNWPNYENGNGAFPNPKERILKQFKLYPSWRAGQYGGLLQPYLWAIEVQDSVETRLYGQLPAVDPQAGPNYVSIDSSNPIIQINMDTWKTPPQGASGWNTNLMRGSVSGLSFLQRDGTRLSAGMGGGFADTIYSLPATHYLSYLYGTPYQTSDNYSGHVGALVGVSTPQEATLPNIIGQPDEQGNVSTMGFPFEKASYGGTVVKEWLNGANAMKLSPGQSIGIPITNVTSGEYQIRCRYASNDNTNVFFNVDTGGANPIFQQINFASTVDNNTGVQGANGVYVVKSIATTDNSFTEIPAKTINVHLTNQGSSDVFLDRIEFIPFSLPLIYHGSYNTSSGADDVLWSSSNMNYYDIIVNGQANSSSIASSMHLLNKGKVIKTIDIPGHSETFFATFPVPEGFNEVRILAGLPEVSGNITVQSNNPPQPSNNGGGDGGGNGGGDGGQYNFSLSGSDHTTIYHGKLETGIHVQGNYTYTGTPVLILNAYRNNTVVSSIPVYSPFDITIQTEADSLELELQPRYGFATVNGTATVKSPNVNYDRSFKLPIDLQNITTQVNALFASGTQNMLAHNVSDHDIEEVVLKVDALSDEVFGDEKKALRKLVNQAKRLSRARNLLIGGSFENWDAWYKGRNVVTVSDHELFKSDHVLLPPPGLSPSYIFQKVEESKLKPNTRYIVSGFIAHGKDLEIVVSRYGQEVQKVVQVPYGEAFPLTSNGPVCCPPRSTSNGTLGDPHFFSYSIDVGALDLQANPGIEFGLRIVNPTGMARVSNLEIREDRPLAANEIRQVQRVARNWRTEYEKERAEVTSLIQPVINRINGLYENGNWNGSIRSDISYQNIDAIVLPTLPKLRHWFMSDRFSEQGDIMAKFQGALNRAYAQLEQSTLLHNGHFTKDAANWTIEGDAHQITLEDGRRVLRLPDWSSSVSQMIEIENFNPDKEYNLVFHGQGEGTVTLEHGEETKYIETHTHHFANFTTSQRQGLTFESNKVTVTISSEDGEFLVDNIALVEAPLPTDDQNSEGNTASSTNSDTSMNNNQ</sequence>
<organism>
    <name type="scientific">Bacillus thuringiensis subsp. darmstadiensis</name>
    <dbReference type="NCBI Taxonomy" id="132264"/>
    <lineage>
        <taxon>Bacteria</taxon>
        <taxon>Bacillati</taxon>
        <taxon>Bacillota</taxon>
        <taxon>Bacilli</taxon>
        <taxon>Bacillales</taxon>
        <taxon>Bacillaceae</taxon>
        <taxon>Bacillus</taxon>
        <taxon>Bacillus cereus group</taxon>
    </lineage>
</organism>
<evidence type="ECO:0000256" key="1">
    <source>
        <dbReference type="SAM" id="MobiDB-lite"/>
    </source>
</evidence>
<evidence type="ECO:0000305" key="2"/>